<keyword id="KW-0507">mRNA processing</keyword>
<keyword id="KW-0508">mRNA splicing</keyword>
<keyword id="KW-0539">Nucleus</keyword>
<keyword id="KW-1185">Reference proteome</keyword>
<name>CWF20_SCHPO</name>
<feature type="chain" id="PRO_0000079615" description="Pre-mRNA-splicing factor cwf20">
    <location>
        <begin position="1"/>
        <end position="290"/>
    </location>
</feature>
<feature type="region of interest" description="Disordered" evidence="1">
    <location>
        <begin position="1"/>
        <end position="61"/>
    </location>
</feature>
<feature type="region of interest" description="Disordered" evidence="1">
    <location>
        <begin position="114"/>
        <end position="134"/>
    </location>
</feature>
<feature type="compositionally biased region" description="Polar residues" evidence="1">
    <location>
        <begin position="114"/>
        <end position="128"/>
    </location>
</feature>
<evidence type="ECO:0000256" key="1">
    <source>
        <dbReference type="SAM" id="MobiDB-lite"/>
    </source>
</evidence>
<evidence type="ECO:0000269" key="2">
    <source>
    </source>
</evidence>
<evidence type="ECO:0000305" key="3"/>
<accession>Q9USK4</accession>
<proteinExistence type="evidence at protein level"/>
<gene>
    <name type="primary">cwf20</name>
    <name type="ORF">SPCC4B3.14</name>
</gene>
<dbReference type="EMBL" id="CU329672">
    <property type="protein sequence ID" value="CAB60688.1"/>
    <property type="molecule type" value="Genomic_DNA"/>
</dbReference>
<dbReference type="PIR" id="T50434">
    <property type="entry name" value="T50434"/>
</dbReference>
<dbReference type="RefSeq" id="NP_588076.1">
    <property type="nucleotide sequence ID" value="NM_001023068.2"/>
</dbReference>
<dbReference type="SMR" id="Q9USK4"/>
<dbReference type="BioGRID" id="276066">
    <property type="interactions" value="4"/>
</dbReference>
<dbReference type="FunCoup" id="Q9USK4">
    <property type="interactions" value="47"/>
</dbReference>
<dbReference type="IntAct" id="Q9USK4">
    <property type="interactions" value="1"/>
</dbReference>
<dbReference type="STRING" id="284812.Q9USK4"/>
<dbReference type="iPTMnet" id="Q9USK4"/>
<dbReference type="SwissPalm" id="Q9USK4"/>
<dbReference type="PaxDb" id="4896-SPCC4B3.14.1"/>
<dbReference type="EnsemblFungi" id="SPCC4B3.14.1">
    <property type="protein sequence ID" value="SPCC4B3.14.1:pep"/>
    <property type="gene ID" value="SPCC4B3.14"/>
</dbReference>
<dbReference type="GeneID" id="2539503"/>
<dbReference type="KEGG" id="spo:2539503"/>
<dbReference type="PomBase" id="SPCC4B3.14">
    <property type="gene designation" value="cwf20"/>
</dbReference>
<dbReference type="VEuPathDB" id="FungiDB:SPCC4B3.14"/>
<dbReference type="eggNOG" id="ENOG502SCRM">
    <property type="taxonomic scope" value="Eukaryota"/>
</dbReference>
<dbReference type="HOGENOM" id="CLU_960286_0_0_1"/>
<dbReference type="InParanoid" id="Q9USK4"/>
<dbReference type="OMA" id="IDVDMNQ"/>
<dbReference type="PRO" id="PR:Q9USK4"/>
<dbReference type="Proteomes" id="UP000002485">
    <property type="component" value="Chromosome III"/>
</dbReference>
<dbReference type="GO" id="GO:0005634">
    <property type="term" value="C:nucleus"/>
    <property type="evidence" value="ECO:0007005"/>
    <property type="project" value="PomBase"/>
</dbReference>
<dbReference type="GO" id="GO:0005681">
    <property type="term" value="C:spliceosomal complex"/>
    <property type="evidence" value="ECO:0000314"/>
    <property type="project" value="PomBase"/>
</dbReference>
<dbReference type="GO" id="GO:0045292">
    <property type="term" value="P:mRNA cis splicing, via spliceosome"/>
    <property type="evidence" value="ECO:0000305"/>
    <property type="project" value="PomBase"/>
</dbReference>
<dbReference type="InterPro" id="IPR018800">
    <property type="entry name" value="PRCC"/>
</dbReference>
<dbReference type="Pfam" id="PF10253">
    <property type="entry name" value="PRCC"/>
    <property type="match status" value="1"/>
</dbReference>
<protein>
    <recommendedName>
        <fullName>Pre-mRNA-splicing factor cwf20</fullName>
    </recommendedName>
    <alternativeName>
        <fullName>Complexed with cdc5 protein 20</fullName>
    </alternativeName>
</protein>
<reference key="1">
    <citation type="journal article" date="2002" name="Nature">
        <title>The genome sequence of Schizosaccharomyces pombe.</title>
        <authorList>
            <person name="Wood V."/>
            <person name="Gwilliam R."/>
            <person name="Rajandream M.A."/>
            <person name="Lyne M.H."/>
            <person name="Lyne R."/>
            <person name="Stewart A."/>
            <person name="Sgouros J.G."/>
            <person name="Peat N."/>
            <person name="Hayles J."/>
            <person name="Baker S.G."/>
            <person name="Basham D."/>
            <person name="Bowman S."/>
            <person name="Brooks K."/>
            <person name="Brown D."/>
            <person name="Brown S."/>
            <person name="Chillingworth T."/>
            <person name="Churcher C.M."/>
            <person name="Collins M."/>
            <person name="Connor R."/>
            <person name="Cronin A."/>
            <person name="Davis P."/>
            <person name="Feltwell T."/>
            <person name="Fraser A."/>
            <person name="Gentles S."/>
            <person name="Goble A."/>
            <person name="Hamlin N."/>
            <person name="Harris D.E."/>
            <person name="Hidalgo J."/>
            <person name="Hodgson G."/>
            <person name="Holroyd S."/>
            <person name="Hornsby T."/>
            <person name="Howarth S."/>
            <person name="Huckle E.J."/>
            <person name="Hunt S."/>
            <person name="Jagels K."/>
            <person name="James K.D."/>
            <person name="Jones L."/>
            <person name="Jones M."/>
            <person name="Leather S."/>
            <person name="McDonald S."/>
            <person name="McLean J."/>
            <person name="Mooney P."/>
            <person name="Moule S."/>
            <person name="Mungall K.L."/>
            <person name="Murphy L.D."/>
            <person name="Niblett D."/>
            <person name="Odell C."/>
            <person name="Oliver K."/>
            <person name="O'Neil S."/>
            <person name="Pearson D."/>
            <person name="Quail M.A."/>
            <person name="Rabbinowitsch E."/>
            <person name="Rutherford K.M."/>
            <person name="Rutter S."/>
            <person name="Saunders D."/>
            <person name="Seeger K."/>
            <person name="Sharp S."/>
            <person name="Skelton J."/>
            <person name="Simmonds M.N."/>
            <person name="Squares R."/>
            <person name="Squares S."/>
            <person name="Stevens K."/>
            <person name="Taylor K."/>
            <person name="Taylor R.G."/>
            <person name="Tivey A."/>
            <person name="Walsh S.V."/>
            <person name="Warren T."/>
            <person name="Whitehead S."/>
            <person name="Woodward J.R."/>
            <person name="Volckaert G."/>
            <person name="Aert R."/>
            <person name="Robben J."/>
            <person name="Grymonprez B."/>
            <person name="Weltjens I."/>
            <person name="Vanstreels E."/>
            <person name="Rieger M."/>
            <person name="Schaefer M."/>
            <person name="Mueller-Auer S."/>
            <person name="Gabel C."/>
            <person name="Fuchs M."/>
            <person name="Duesterhoeft A."/>
            <person name="Fritzc C."/>
            <person name="Holzer E."/>
            <person name="Moestl D."/>
            <person name="Hilbert H."/>
            <person name="Borzym K."/>
            <person name="Langer I."/>
            <person name="Beck A."/>
            <person name="Lehrach H."/>
            <person name="Reinhardt R."/>
            <person name="Pohl T.M."/>
            <person name="Eger P."/>
            <person name="Zimmermann W."/>
            <person name="Wedler H."/>
            <person name="Wambutt R."/>
            <person name="Purnelle B."/>
            <person name="Goffeau A."/>
            <person name="Cadieu E."/>
            <person name="Dreano S."/>
            <person name="Gloux S."/>
            <person name="Lelaure V."/>
            <person name="Mottier S."/>
            <person name="Galibert F."/>
            <person name="Aves S.J."/>
            <person name="Xiang Z."/>
            <person name="Hunt C."/>
            <person name="Moore K."/>
            <person name="Hurst S.M."/>
            <person name="Lucas M."/>
            <person name="Rochet M."/>
            <person name="Gaillardin C."/>
            <person name="Tallada V.A."/>
            <person name="Garzon A."/>
            <person name="Thode G."/>
            <person name="Daga R.R."/>
            <person name="Cruzado L."/>
            <person name="Jimenez J."/>
            <person name="Sanchez M."/>
            <person name="del Rey F."/>
            <person name="Benito J."/>
            <person name="Dominguez A."/>
            <person name="Revuelta J.L."/>
            <person name="Moreno S."/>
            <person name="Armstrong J."/>
            <person name="Forsburg S.L."/>
            <person name="Cerutti L."/>
            <person name="Lowe T."/>
            <person name="McCombie W.R."/>
            <person name="Paulsen I."/>
            <person name="Potashkin J."/>
            <person name="Shpakovski G.V."/>
            <person name="Ussery D."/>
            <person name="Barrell B.G."/>
            <person name="Nurse P."/>
        </authorList>
    </citation>
    <scope>NUCLEOTIDE SEQUENCE [LARGE SCALE GENOMIC DNA]</scope>
    <source>
        <strain>972 / ATCC 24843</strain>
    </source>
</reference>
<reference key="2">
    <citation type="journal article" date="2002" name="Mol. Cell. Biol.">
        <title>Proteomics analysis reveals stable multiprotein complexes in both fission and budding yeasts containing Myb-related Cdc5p/Cef1p, novel pre-mRNA splicing factors, and snRNAs.</title>
        <authorList>
            <person name="Ohi M.D."/>
            <person name="Link A.J."/>
            <person name="Ren L."/>
            <person name="Jennings J.L."/>
            <person name="McDonald W.H."/>
            <person name="Gould K.L."/>
        </authorList>
    </citation>
    <scope>IDENTIFICATION IN THE CWF COMPLEX</scope>
    <scope>IDENTIFICATION BY MASS SPECTROMETRY</scope>
</reference>
<organism>
    <name type="scientific">Schizosaccharomyces pombe (strain 972 / ATCC 24843)</name>
    <name type="common">Fission yeast</name>
    <dbReference type="NCBI Taxonomy" id="284812"/>
    <lineage>
        <taxon>Eukaryota</taxon>
        <taxon>Fungi</taxon>
        <taxon>Dikarya</taxon>
        <taxon>Ascomycota</taxon>
        <taxon>Taphrinomycotina</taxon>
        <taxon>Schizosaccharomycetes</taxon>
        <taxon>Schizosaccharomycetales</taxon>
        <taxon>Schizosaccharomycetaceae</taxon>
        <taxon>Schizosaccharomyces</taxon>
    </lineage>
</organism>
<sequence length="290" mass="32564">MSLVSYPRSESESDIEEETPLASKSFDPTLFQHARRKLSVDSTKKSPKRLKRQVDLQKSSFNDKTFNESDVISNERFKSNDLLELLPAPKNQAELAPKSSKRSDLDLNENYLLPNNSVSDLTSTGSSETVKKSTYSEKSGNVSLFNIVGSESKQASLVDSDQKPYQPILIKPKARANPPKLRNQPENDFISIANHSVHSNAEDINIINEDYIEIGRHRKEKGRIIDVDINKLPKPTQEALPSAPTIKSVAPGRHQLSSLVEMAISQKDNFEAYFEQQRSNKKASSQKYGF</sequence>
<comment type="function">
    <text>Involved in mRNA splicing where it associates with cdc5 and the other cwf proteins as part of the spliceosome.</text>
</comment>
<comment type="subunit">
    <text evidence="2">Belongs to the 40S cdc5-associated complex (or cwf complex), a spliceosome sub-complex reminiscent of a late-stage spliceosome composed of the U2, U5 and U6 snRNAs and at least brr2, cdc5, cwf2/prp3, cwf3/syf1, cwf4/syf3, cwf5/ecm2, spp42/cwf6, cwf7/spf27, cwf8, cwf9, cwf10, cwf11, cwf12, prp45/cwf13, cwf14, cwf15, cwf16, cwf17, cwf18, cwf19, cwf20, cwf21, cwf22, cwf23, cwf24, cwf25, cwf26, cyp7/cwf27, cwf28, cwf29/ist3, lea1, msl1, prp5/cwf1, prp10, prp12/sap130, prp17, prp22, sap61, sap62, sap114, sap145, slu7, smb1, smd1, smd3, smf1, smg1 and syf2.</text>
</comment>
<comment type="subcellular location">
    <subcellularLocation>
        <location evidence="3">Nucleus</location>
    </subcellularLocation>
</comment>